<comment type="function">
    <molecule>DNA repair protein XRCC4</molecule>
    <text evidence="1 6">DNA non-homologous end joining (NHEJ) core factor, required for double-strand break repair and V(D)J recombination (PubMed:18093953). Acts as a scaffold protein that regulates recruitment of other proteins to DNA double-strand breaks (DSBs). Associates with NHEJ1/XLF to form alternating helical filaments that bridge DNA and act like a bandage, holding together the broken DNA until it is repaired. The XRCC4-NHEJ1/XLF subcomplex binds to the DNA fragments of a DSB in a highly diffusive manner and robustly bridges two independent DNA molecules, holding the broken DNA fragments in close proximity to one other. The mobility of the bridges ensures that the ends remain accessible for further processing by other repair factors. Plays a key role in the NHEJ ligation step of the broken DNA during DSB repair via direct interaction with DNA ligase IV (LIG4): the LIG4-XRCC4 subcomplex reseals the DNA breaks after the gap filling is completed. XRCC4 stabilizes LIG4, regulates its subcellular localization and enhances LIG4's joining activity. Binding of the LIG4-XRCC4 subcomplex to DNA ends is dependent on the assembly of the DNA-dependent protein kinase complex DNA-PK to these DNA ends. Promotes displacement of PNKP from processed strand break termini (By similarity).</text>
</comment>
<comment type="function">
    <molecule>Protein XRCC4, C-terminus</molecule>
    <text evidence="1">Acts as an activator of the phospholipid scramblase activity of XKR4. This form, which is generated upon caspase-3 (CASP3) cleavage, translocates into the cytoplasm and interacts with XKR4, thereby promoting phosphatidylserine scramblase activity of XKR4 and leading to phosphatidylserine exposure on apoptotic cell surface.</text>
</comment>
<comment type="subunit">
    <molecule>DNA repair protein XRCC4</molecule>
    <text evidence="1 5">Homodimer and homotetramer in solution (By similarity). Interacts with NHEJ1/XLF; the interaction is direct and is mediated via a head-to-head interaction between N-terminal head regions (By similarity). Interacts with LIG4; the LIG4-XRCC4 subcomplex has a 1:2 stoichiometry and XRCC4 is required for LIG4 stability (PubMed:10047779). Component of the core long-range non-homologous end joining (NHEJ) complex (also named DNA-PK complex) composed of PRKDC, LIG4, XRCC4, XRCC6/Ku70, XRCC5/Ku86 and NHEJ1/XLF (By similarity). Additional component of the NHEJ complex includes PAXX (By similarity). Following autophosphorylation, PRKDC dissociates from DNA, leading to formation of the short-range NHEJ complex, composed of LIG4, XRCC4, XRCC6/Ku70, XRCC5/Ku86 and NHEJ1/XLF (By similarity). Interacts with PRKDC; the interaction is direct (By similarity). Interacts with XRCC6/Ku70; the interaction is direct (By similarity). Interacts with APTX and APLF (By similarity). Forms a heterotetramer with IFFO1; the interaction involves LIG4-free XRCC4 and leads to the relocalization of IFFO1 to the sites of DNA damage (By similarity). Interacts with PNKP; mainly interacts with PNKP when phosphorylated at Thr-230, but is also able to interact at much lower level with PNKP when not unphosphorylated (By similarity). Interacts with POLL (DNA polymerase lambda) (By similarity).</text>
</comment>
<comment type="subunit">
    <molecule>Protein XRCC4, C-terminus</molecule>
    <text evidence="1">Interacts with XKR4; interacts with the processed form of XKR4, which is cleaved by caspase.</text>
</comment>
<comment type="subcellular location">
    <subcellularLocation>
        <location evidence="1">Nucleus</location>
    </subcellularLocation>
    <subcellularLocation>
        <location evidence="1">Chromosome</location>
    </subcellularLocation>
    <text evidence="1">Localizes to site of double-strand breaks.</text>
</comment>
<comment type="subcellular location">
    <molecule>Protein XRCC4, C-terminus</molecule>
    <subcellularLocation>
        <location evidence="1">Cytoplasm</location>
    </subcellularLocation>
    <text evidence="1">Translocates from the nucleus to the cytoplasm following cleavage by caspase-3 (CASP3).</text>
</comment>
<comment type="PTM">
    <text evidence="1">Phosphorylated by PRKDC at the C-terminus in response to DNA damage; Ser-253 constitutes the main phosphorylation sites. Phosphorylations by PRKDC at the C-terminus of XRCC4 and NHEJ1/XLF are highly redundant and regulate ability of the XRCC4-NHEJ1/XLF subcomplex to bridge DNA. Phosphorylation by PRKDC does not prevent interaction with NHEJ1/XLF but disrupts ability to bridge DNA and promotes detachment from DNA. Phosphorylation at Ser-320 and Ser-321 by PRKDC promotes recognition by the SCF(FBXW7) complex and subsequent ubiquitination via 'Lys-63'-linked ubiquitin. Phosphorylation at Thr-230 by CK2 promotes interaction with PNKP; regulating PNKP activity and localization to DNA damage sites. Phosphorylation by CK2 promotes interaction with APTX.</text>
</comment>
<comment type="PTM">
    <text evidence="1">Ubiquitinated at Lys-289 by the SCF(FBXW7) complex via 'Lys-63'-linked ubiquitination, thereby promoting double-strand break repair: the SCF(FBXW7) complex specifically recognizes XRCC4 when phosphorylated at Ser-320 and Ser-321 by PRKDC, and 'Lys-63'-linked ubiquitination facilitates DNA non-homologous end joining (NHEJ) by enhancing association with XRCC5/Ku80 and XRCC6/Ku70. Monoubiquitinated.</text>
</comment>
<comment type="PTM">
    <molecule>DNA repair protein XRCC4</molecule>
    <text evidence="1">Undergoes proteolytic processing by caspase-3 (CASP3). This generates the protein XRCC4, C-terminus (XRCC4/C), which translocates to the cytoplasm and activates phospholipid scramblase activity of XKR4, thereby promoting phosphatidylserine exposure on apoptotic cell surface.</text>
</comment>
<comment type="similarity">
    <text evidence="9">Belongs to the XRCC4-XLF family. XRCC4 subfamily.</text>
</comment>
<protein>
    <recommendedName>
        <fullName evidence="9">DNA repair protein XRCC4</fullName>
    </recommendedName>
    <alternativeName>
        <fullName evidence="7">X-ray repair cross-complementing protein 4</fullName>
    </alternativeName>
    <component>
        <recommendedName>
            <fullName evidence="1">Protein XRCC4, C-terminus</fullName>
            <shortName evidence="1">XRCC4/C</shortName>
        </recommendedName>
    </component>
</protein>
<feature type="chain" id="PRO_0000453298" description="DNA repair protein XRCC4">
    <location>
        <begin position="1"/>
        <end position="327"/>
    </location>
</feature>
<feature type="chain" id="PRO_0000453299" description="Protein XRCC4, C-terminus" evidence="1">
    <location>
        <begin position="259"/>
        <end position="327"/>
    </location>
</feature>
<feature type="region of interest" description="Interaction with IFFO1" evidence="1">
    <location>
        <begin position="1"/>
        <end position="211"/>
    </location>
</feature>
<feature type="region of interest" description="Interaction with LIG4" evidence="1">
    <location>
        <begin position="179"/>
        <end position="211"/>
    </location>
</feature>
<feature type="region of interest" description="Interaction with LIG4" evidence="1">
    <location>
        <begin position="179"/>
        <end position="210"/>
    </location>
</feature>
<feature type="region of interest" description="Disordered" evidence="4">
    <location>
        <begin position="255"/>
        <end position="327"/>
    </location>
</feature>
<feature type="coiled-coil region" evidence="3">
    <location>
        <begin position="133"/>
        <end position="153"/>
    </location>
</feature>
<feature type="coiled-coil region" evidence="3">
    <location>
        <begin position="183"/>
        <end position="213"/>
    </location>
</feature>
<feature type="short sequence motif" description="Nuclear localization signal" evidence="1">
    <location>
        <begin position="263"/>
        <end position="268"/>
    </location>
</feature>
<feature type="compositionally biased region" description="Polar residues" evidence="4">
    <location>
        <begin position="308"/>
        <end position="327"/>
    </location>
</feature>
<feature type="site" description="Cleavage; by caspase-3" evidence="1">
    <location>
        <begin position="258"/>
        <end position="259"/>
    </location>
</feature>
<feature type="modified residue" description="Phosphoserine" evidence="1">
    <location>
        <position position="53"/>
    </location>
</feature>
<feature type="modified residue" description="Phosphoserine" evidence="1">
    <location>
        <position position="192"/>
    </location>
</feature>
<feature type="modified residue" description="Phosphotyrosine" evidence="1">
    <location>
        <position position="226"/>
    </location>
</feature>
<feature type="modified residue" description="Phosphoserine" evidence="1">
    <location>
        <position position="229"/>
    </location>
</feature>
<feature type="modified residue" description="Phosphothreonine" evidence="1">
    <location>
        <position position="230"/>
    </location>
</feature>
<feature type="modified residue" description="Phosphoserine" evidence="1">
    <location>
        <position position="249"/>
    </location>
</feature>
<feature type="modified residue" description="Phosphoserine" evidence="1">
    <location>
        <position position="253"/>
    </location>
</feature>
<feature type="modified residue" description="Phosphoserine" evidence="1">
    <location>
        <position position="294"/>
    </location>
</feature>
<feature type="modified residue" description="Phosphoserine" evidence="1">
    <location>
        <position position="295"/>
    </location>
</feature>
<feature type="modified residue" description="Phosphoserine" evidence="1">
    <location>
        <position position="308"/>
    </location>
</feature>
<feature type="modified residue" description="Phosphoserine" evidence="1">
    <location>
        <position position="313"/>
    </location>
</feature>
<feature type="modified residue" description="Phosphothreonine" evidence="2">
    <location>
        <position position="316"/>
    </location>
</feature>
<feature type="modified residue" description="Phosphoserine" evidence="2">
    <location>
        <position position="320"/>
    </location>
</feature>
<feature type="modified residue" description="Phosphoserine" evidence="2">
    <location>
        <position position="321"/>
    </location>
</feature>
<feature type="cross-link" description="Glycyl lysine isopeptide (Lys-Gly) (interchain with G-Cter in SUMO)" evidence="1">
    <location>
        <position position="208"/>
    </location>
</feature>
<feature type="cross-link" description="Glycyl lysine isopeptide (Lys-Gly) (interchain with G-Cter in ubiquitin)" evidence="1">
    <location>
        <position position="289"/>
    </location>
</feature>
<keyword id="KW-0158">Chromosome</keyword>
<keyword id="KW-0175">Coiled coil</keyword>
<keyword id="KW-0963">Cytoplasm</keyword>
<keyword id="KW-0227">DNA damage</keyword>
<keyword id="KW-0233">DNA recombination</keyword>
<keyword id="KW-0234">DNA repair</keyword>
<keyword id="KW-0238">DNA-binding</keyword>
<keyword id="KW-1017">Isopeptide bond</keyword>
<keyword id="KW-0539">Nucleus</keyword>
<keyword id="KW-0597">Phosphoprotein</keyword>
<keyword id="KW-1185">Reference proteome</keyword>
<keyword id="KW-0832">Ubl conjugation</keyword>
<reference key="1">
    <citation type="journal article" date="2011" name="Nat. Biotechnol.">
        <title>The genomic sequence of the Chinese hamster ovary (CHO)-K1 cell line.</title>
        <authorList>
            <person name="Xu X."/>
            <person name="Nagarajan H."/>
            <person name="Lewis N.E."/>
            <person name="Pan S."/>
            <person name="Cai Z."/>
            <person name="Liu X."/>
            <person name="Chen W."/>
            <person name="Xie M."/>
            <person name="Wang W."/>
            <person name="Hammond S."/>
            <person name="Andersen M.R."/>
            <person name="Neff N."/>
            <person name="Passarelli B."/>
            <person name="Koh W."/>
            <person name="Fan H.C."/>
            <person name="Wang J."/>
            <person name="Gui Y."/>
            <person name="Lee K.H."/>
            <person name="Betenbaugh M.J."/>
            <person name="Quake S.R."/>
            <person name="Famili I."/>
            <person name="Palsson B.O."/>
            <person name="Wang J."/>
        </authorList>
    </citation>
    <scope>NUCLEOTIDE SEQUENCE [LARGE SCALE GENOMIC DNA]</scope>
</reference>
<reference key="2">
    <citation type="journal article" date="2007" name="Proc. Natl. Acad. Sci. U.S.A.">
        <title>Defects in XRCC4 and KU80 differentially affect the joining of distal nonhomologous ends.</title>
        <authorList>
            <person name="Guirouilh-Barbat J."/>
            <person name="Rass E."/>
            <person name="Plo I."/>
            <person name="Bertrand P."/>
            <person name="Lopez B.S."/>
        </authorList>
    </citation>
    <scope>FUNCTION</scope>
</reference>
<reference key="3">
    <citation type="journal article" date="1999" name="Mutat. Res.">
        <title>Absence of DNA ligase IV protein in XR-1 cells: evidence for stabilization by XRCC4.</title>
        <authorList>
            <person name="Bryans M."/>
            <person name="Valenzano M.C."/>
            <person name="Stamato T.D."/>
        </authorList>
    </citation>
    <scope>INTERACTION WITH LIG4</scope>
</reference>
<evidence type="ECO:0000250" key="1">
    <source>
        <dbReference type="UniProtKB" id="Q13426"/>
    </source>
</evidence>
<evidence type="ECO:0000250" key="2">
    <source>
        <dbReference type="UniProtKB" id="Q924T3"/>
    </source>
</evidence>
<evidence type="ECO:0000255" key="3"/>
<evidence type="ECO:0000256" key="4">
    <source>
        <dbReference type="SAM" id="MobiDB-lite"/>
    </source>
</evidence>
<evidence type="ECO:0000269" key="5">
    <source>
    </source>
</evidence>
<evidence type="ECO:0000269" key="6">
    <source>
    </source>
</evidence>
<evidence type="ECO:0000303" key="7">
    <source>
    </source>
</evidence>
<evidence type="ECO:0000303" key="8">
    <source>
    </source>
</evidence>
<evidence type="ECO:0000305" key="9"/>
<dbReference type="EMBL" id="JH000462">
    <property type="protein sequence ID" value="EGW09548.1"/>
    <property type="molecule type" value="Genomic_DNA"/>
</dbReference>
<dbReference type="RefSeq" id="XP_007634343.1">
    <property type="nucleotide sequence ID" value="XM_007636153.2"/>
</dbReference>
<dbReference type="SMR" id="G3HKI1"/>
<dbReference type="FunCoup" id="G3HKI1">
    <property type="interactions" value="1113"/>
</dbReference>
<dbReference type="STRING" id="10029.G3HKI1"/>
<dbReference type="PaxDb" id="10029-XP_007634343.1"/>
<dbReference type="Ensembl" id="ENSCGRT00001028642.1">
    <property type="protein sequence ID" value="ENSCGRP00001024396.1"/>
    <property type="gene ID" value="ENSCGRG00001022340.1"/>
</dbReference>
<dbReference type="GeneID" id="100768249"/>
<dbReference type="eggNOG" id="ENOG502QWJA">
    <property type="taxonomic scope" value="Eukaryota"/>
</dbReference>
<dbReference type="GeneTree" id="ENSGT00390000017079"/>
<dbReference type="InParanoid" id="G3HKI1"/>
<dbReference type="OrthoDB" id="8064436at2759"/>
<dbReference type="Proteomes" id="UP000001075">
    <property type="component" value="Unassembled WGS sequence"/>
</dbReference>
<dbReference type="Proteomes" id="UP000694386">
    <property type="component" value="Unplaced"/>
</dbReference>
<dbReference type="Proteomes" id="UP001108280">
    <property type="component" value="Unplaced"/>
</dbReference>
<dbReference type="GO" id="GO:0005829">
    <property type="term" value="C:cytosol"/>
    <property type="evidence" value="ECO:0007669"/>
    <property type="project" value="Ensembl"/>
</dbReference>
<dbReference type="GO" id="GO:0032807">
    <property type="term" value="C:DNA ligase IV complex"/>
    <property type="evidence" value="ECO:0007669"/>
    <property type="project" value="Ensembl"/>
</dbReference>
<dbReference type="GO" id="GO:0005958">
    <property type="term" value="C:DNA-dependent protein kinase-DNA ligase 4 complex"/>
    <property type="evidence" value="ECO:0000250"/>
    <property type="project" value="UniProtKB"/>
</dbReference>
<dbReference type="GO" id="GO:0005654">
    <property type="term" value="C:nucleoplasm"/>
    <property type="evidence" value="ECO:0007669"/>
    <property type="project" value="Ensembl"/>
</dbReference>
<dbReference type="GO" id="GO:0005634">
    <property type="term" value="C:nucleus"/>
    <property type="evidence" value="ECO:0000250"/>
    <property type="project" value="UniProtKB"/>
</dbReference>
<dbReference type="GO" id="GO:0035861">
    <property type="term" value="C:site of double-strand break"/>
    <property type="evidence" value="ECO:0000250"/>
    <property type="project" value="UniProtKB"/>
</dbReference>
<dbReference type="GO" id="GO:0003677">
    <property type="term" value="F:DNA binding"/>
    <property type="evidence" value="ECO:0007669"/>
    <property type="project" value="UniProtKB-KW"/>
</dbReference>
<dbReference type="GO" id="GO:0019899">
    <property type="term" value="F:enzyme binding"/>
    <property type="evidence" value="ECO:0007669"/>
    <property type="project" value="Ensembl"/>
</dbReference>
<dbReference type="GO" id="GO:0070975">
    <property type="term" value="F:FHA domain binding"/>
    <property type="evidence" value="ECO:0007669"/>
    <property type="project" value="Ensembl"/>
</dbReference>
<dbReference type="GO" id="GO:0042802">
    <property type="term" value="F:identical protein binding"/>
    <property type="evidence" value="ECO:0007669"/>
    <property type="project" value="Ensembl"/>
</dbReference>
<dbReference type="GO" id="GO:0006284">
    <property type="term" value="P:base-excision repair"/>
    <property type="evidence" value="ECO:0007669"/>
    <property type="project" value="Ensembl"/>
</dbReference>
<dbReference type="GO" id="GO:0006303">
    <property type="term" value="P:double-strand break repair via nonhomologous end joining"/>
    <property type="evidence" value="ECO:0000250"/>
    <property type="project" value="UniProtKB"/>
</dbReference>
<dbReference type="GO" id="GO:0033152">
    <property type="term" value="P:immunoglobulin V(D)J recombination"/>
    <property type="evidence" value="ECO:0007669"/>
    <property type="project" value="TreeGrafter"/>
</dbReference>
<dbReference type="GO" id="GO:1990166">
    <property type="term" value="P:protein localization to site of double-strand break"/>
    <property type="evidence" value="ECO:0007669"/>
    <property type="project" value="Ensembl"/>
</dbReference>
<dbReference type="GO" id="GO:0010165">
    <property type="term" value="P:response to X-ray"/>
    <property type="evidence" value="ECO:0007669"/>
    <property type="project" value="Ensembl"/>
</dbReference>
<dbReference type="CDD" id="cd22283">
    <property type="entry name" value="HD_XRCC4_N"/>
    <property type="match status" value="1"/>
</dbReference>
<dbReference type="FunFam" id="2.170.210.10:FF:000002">
    <property type="entry name" value="DNA repair protein XRCC4"/>
    <property type="match status" value="1"/>
</dbReference>
<dbReference type="FunFam" id="1.20.5.370:FF:000011">
    <property type="entry name" value="DNA repair protein XRCC4 isoform X2"/>
    <property type="match status" value="1"/>
</dbReference>
<dbReference type="Gene3D" id="1.20.5.370">
    <property type="match status" value="1"/>
</dbReference>
<dbReference type="Gene3D" id="2.170.210.10">
    <property type="entry name" value="DNA double-strand break repair and VJ recombination XRCC4, N-terminal"/>
    <property type="match status" value="1"/>
</dbReference>
<dbReference type="InterPro" id="IPR010585">
    <property type="entry name" value="DNA_repair_prot_XRCC4"/>
</dbReference>
<dbReference type="InterPro" id="IPR014751">
    <property type="entry name" value="XRCC4-like_C"/>
</dbReference>
<dbReference type="InterPro" id="IPR038051">
    <property type="entry name" value="XRCC4-like_N_sf"/>
</dbReference>
<dbReference type="InterPro" id="IPR053963">
    <property type="entry name" value="XRCC4_C"/>
</dbReference>
<dbReference type="InterPro" id="IPR053962">
    <property type="entry name" value="XRCC4_CC"/>
</dbReference>
<dbReference type="InterPro" id="IPR053961">
    <property type="entry name" value="XRCC4_N"/>
</dbReference>
<dbReference type="InterPro" id="IPR009089">
    <property type="entry name" value="XRCC4_N_sf"/>
</dbReference>
<dbReference type="PANTHER" id="PTHR28559">
    <property type="entry name" value="DNA REPAIR PROTEIN XRCC4"/>
    <property type="match status" value="1"/>
</dbReference>
<dbReference type="PANTHER" id="PTHR28559:SF1">
    <property type="entry name" value="DNA REPAIR PROTEIN XRCC4"/>
    <property type="match status" value="1"/>
</dbReference>
<dbReference type="Pfam" id="PF06632">
    <property type="entry name" value="XRCC4"/>
    <property type="match status" value="1"/>
</dbReference>
<dbReference type="Pfam" id="PF21925">
    <property type="entry name" value="XRCC4_C"/>
    <property type="match status" value="1"/>
</dbReference>
<dbReference type="Pfam" id="PF21924">
    <property type="entry name" value="XRCC4_CC"/>
    <property type="match status" value="1"/>
</dbReference>
<dbReference type="SUPFAM" id="SSF58022">
    <property type="entry name" value="XRCC4, C-terminal oligomerization domain"/>
    <property type="match status" value="1"/>
</dbReference>
<dbReference type="SUPFAM" id="SSF50809">
    <property type="entry name" value="XRCC4, N-terminal domain"/>
    <property type="match status" value="1"/>
</dbReference>
<accession>G3HKI1</accession>
<name>XRCC4_CRIGR</name>
<gene>
    <name evidence="7" type="primary">XRCC4</name>
    <name evidence="8" type="ORF">I79_011207</name>
</gene>
<organism>
    <name type="scientific">Cricetulus griseus</name>
    <name type="common">Chinese hamster</name>
    <name type="synonym">Cricetulus barabensis griseus</name>
    <dbReference type="NCBI Taxonomy" id="10029"/>
    <lineage>
        <taxon>Eukaryota</taxon>
        <taxon>Metazoa</taxon>
        <taxon>Chordata</taxon>
        <taxon>Craniata</taxon>
        <taxon>Vertebrata</taxon>
        <taxon>Euteleostomi</taxon>
        <taxon>Mammalia</taxon>
        <taxon>Eutheria</taxon>
        <taxon>Euarchontoglires</taxon>
        <taxon>Glires</taxon>
        <taxon>Rodentia</taxon>
        <taxon>Myomorpha</taxon>
        <taxon>Muroidea</taxon>
        <taxon>Cricetidae</taxon>
        <taxon>Cricetinae</taxon>
        <taxon>Cricetulus</taxon>
    </lineage>
</organism>
<proteinExistence type="evidence at protein level"/>
<sequence>MERKVSRISLASEPNITYFLQVSWEETVGSGFVITLTDGHSAWTATVSESEISQEADDMAMEKEKYADELRKALVSGSGSDTYKFIFSRESCHFSLEKELKDVSFRLGSFNLDKVPNSTEVIRELICYCLDTIAEKQAKNEHLQKENDRLLRDWNDVQGRFEKCVIAKEALEADLYQRFILVLNEKKTKIRSLHKLLDEIQQLEKNLKPERETKCSEKTTDQDAIYDGSTDEEAGASVLAEAAVCKEDSLFSSPDVTDIAPSRKRRHHMQKNLGTEPKMAPQEQQLQGKERLASSLPHTLKEEHEHTSAGNMSLETLRNSSPEDIFD</sequence>